<accession>A2QTE8</accession>
<dbReference type="EC" id="1.-.-.-" evidence="6"/>
<dbReference type="EMBL" id="AM270194">
    <property type="protein sequence ID" value="CAK40123.1"/>
    <property type="molecule type" value="Genomic_DNA"/>
</dbReference>
<dbReference type="RefSeq" id="XP_001393500.1">
    <property type="nucleotide sequence ID" value="XM_001393463.1"/>
</dbReference>
<dbReference type="SMR" id="A2QTE8"/>
<dbReference type="EnsemblFungi" id="CAK40123">
    <property type="protein sequence ID" value="CAK40123"/>
    <property type="gene ID" value="An09g01850"/>
</dbReference>
<dbReference type="GeneID" id="4983716"/>
<dbReference type="KEGG" id="ang:An09g01850"/>
<dbReference type="VEuPathDB" id="FungiDB:An09g01850"/>
<dbReference type="HOGENOM" id="CLU_001570_14_2_1"/>
<dbReference type="Proteomes" id="UP000006706">
    <property type="component" value="Chromosome 1L"/>
</dbReference>
<dbReference type="GO" id="GO:0016020">
    <property type="term" value="C:membrane"/>
    <property type="evidence" value="ECO:0007669"/>
    <property type="project" value="UniProtKB-SubCell"/>
</dbReference>
<dbReference type="GO" id="GO:0020037">
    <property type="term" value="F:heme binding"/>
    <property type="evidence" value="ECO:0007669"/>
    <property type="project" value="InterPro"/>
</dbReference>
<dbReference type="GO" id="GO:0005506">
    <property type="term" value="F:iron ion binding"/>
    <property type="evidence" value="ECO:0007669"/>
    <property type="project" value="InterPro"/>
</dbReference>
<dbReference type="GO" id="GO:0004497">
    <property type="term" value="F:monooxygenase activity"/>
    <property type="evidence" value="ECO:0007669"/>
    <property type="project" value="UniProtKB-KW"/>
</dbReference>
<dbReference type="GO" id="GO:0016705">
    <property type="term" value="F:oxidoreductase activity, acting on paired donors, with incorporation or reduction of molecular oxygen"/>
    <property type="evidence" value="ECO:0007669"/>
    <property type="project" value="InterPro"/>
</dbReference>
<dbReference type="CDD" id="cd11059">
    <property type="entry name" value="CYP_fungal"/>
    <property type="match status" value="1"/>
</dbReference>
<dbReference type="Gene3D" id="1.10.630.10">
    <property type="entry name" value="Cytochrome P450"/>
    <property type="match status" value="1"/>
</dbReference>
<dbReference type="InterPro" id="IPR001128">
    <property type="entry name" value="Cyt_P450"/>
</dbReference>
<dbReference type="InterPro" id="IPR002401">
    <property type="entry name" value="Cyt_P450_E_grp-I"/>
</dbReference>
<dbReference type="InterPro" id="IPR036396">
    <property type="entry name" value="Cyt_P450_sf"/>
</dbReference>
<dbReference type="InterPro" id="IPR050121">
    <property type="entry name" value="Cytochrome_P450_monoxygenase"/>
</dbReference>
<dbReference type="PANTHER" id="PTHR24305">
    <property type="entry name" value="CYTOCHROME P450"/>
    <property type="match status" value="1"/>
</dbReference>
<dbReference type="PANTHER" id="PTHR24305:SF96">
    <property type="entry name" value="CYTOCHROME P450 MONOOXYGENASE STCB-RELATED"/>
    <property type="match status" value="1"/>
</dbReference>
<dbReference type="Pfam" id="PF00067">
    <property type="entry name" value="p450"/>
    <property type="match status" value="1"/>
</dbReference>
<dbReference type="PRINTS" id="PR00463">
    <property type="entry name" value="EP450I"/>
</dbReference>
<dbReference type="PRINTS" id="PR00385">
    <property type="entry name" value="P450"/>
</dbReference>
<dbReference type="SUPFAM" id="SSF48264">
    <property type="entry name" value="Cytochrome P450"/>
    <property type="match status" value="1"/>
</dbReference>
<organism>
    <name type="scientific">Aspergillus niger (strain ATCC MYA-4892 / CBS 513.88 / FGSC A1513)</name>
    <dbReference type="NCBI Taxonomy" id="425011"/>
    <lineage>
        <taxon>Eukaryota</taxon>
        <taxon>Fungi</taxon>
        <taxon>Dikarya</taxon>
        <taxon>Ascomycota</taxon>
        <taxon>Pezizomycotina</taxon>
        <taxon>Eurotiomycetes</taxon>
        <taxon>Eurotiomycetidae</taxon>
        <taxon>Eurotiales</taxon>
        <taxon>Aspergillaceae</taxon>
        <taxon>Aspergillus</taxon>
        <taxon>Aspergillus subgen. Circumdati</taxon>
    </lineage>
</organism>
<feature type="chain" id="PRO_0000446158" description="Cytochrome P450 monooxygenase orf2">
    <location>
        <begin position="1"/>
        <end position="488"/>
    </location>
</feature>
<feature type="transmembrane region" description="Helical" evidence="2">
    <location>
        <begin position="7"/>
        <end position="27"/>
    </location>
</feature>
<feature type="binding site" description="axial binding residue" evidence="1">
    <location>
        <position position="432"/>
    </location>
    <ligand>
        <name>heme</name>
        <dbReference type="ChEBI" id="CHEBI:30413"/>
    </ligand>
    <ligandPart>
        <name>Fe</name>
        <dbReference type="ChEBI" id="CHEBI:18248"/>
    </ligandPart>
</feature>
<reference key="1">
    <citation type="journal article" date="2007" name="Nat. Biotechnol.">
        <title>Genome sequencing and analysis of the versatile cell factory Aspergillus niger CBS 513.88.</title>
        <authorList>
            <person name="Pel H.J."/>
            <person name="de Winde J.H."/>
            <person name="Archer D.B."/>
            <person name="Dyer P.S."/>
            <person name="Hofmann G."/>
            <person name="Schaap P.J."/>
            <person name="Turner G."/>
            <person name="de Vries R.P."/>
            <person name="Albang R."/>
            <person name="Albermann K."/>
            <person name="Andersen M.R."/>
            <person name="Bendtsen J.D."/>
            <person name="Benen J.A.E."/>
            <person name="van den Berg M."/>
            <person name="Breestraat S."/>
            <person name="Caddick M.X."/>
            <person name="Contreras R."/>
            <person name="Cornell M."/>
            <person name="Coutinho P.M."/>
            <person name="Danchin E.G.J."/>
            <person name="Debets A.J.M."/>
            <person name="Dekker P."/>
            <person name="van Dijck P.W.M."/>
            <person name="van Dijk A."/>
            <person name="Dijkhuizen L."/>
            <person name="Driessen A.J.M."/>
            <person name="d'Enfert C."/>
            <person name="Geysens S."/>
            <person name="Goosen C."/>
            <person name="Groot G.S.P."/>
            <person name="de Groot P.W.J."/>
            <person name="Guillemette T."/>
            <person name="Henrissat B."/>
            <person name="Herweijer M."/>
            <person name="van den Hombergh J.P.T.W."/>
            <person name="van den Hondel C.A.M.J.J."/>
            <person name="van der Heijden R.T.J.M."/>
            <person name="van der Kaaij R.M."/>
            <person name="Klis F.M."/>
            <person name="Kools H.J."/>
            <person name="Kubicek C.P."/>
            <person name="van Kuyk P.A."/>
            <person name="Lauber J."/>
            <person name="Lu X."/>
            <person name="van der Maarel M.J.E.C."/>
            <person name="Meulenberg R."/>
            <person name="Menke H."/>
            <person name="Mortimer M.A."/>
            <person name="Nielsen J."/>
            <person name="Oliver S.G."/>
            <person name="Olsthoorn M."/>
            <person name="Pal K."/>
            <person name="van Peij N.N.M.E."/>
            <person name="Ram A.F.J."/>
            <person name="Rinas U."/>
            <person name="Roubos J.A."/>
            <person name="Sagt C.M.J."/>
            <person name="Schmoll M."/>
            <person name="Sun J."/>
            <person name="Ussery D."/>
            <person name="Varga J."/>
            <person name="Vervecken W."/>
            <person name="van de Vondervoort P.J.J."/>
            <person name="Wedler H."/>
            <person name="Woesten H.A.B."/>
            <person name="Zeng A.-P."/>
            <person name="van Ooyen A.J.J."/>
            <person name="Visser J."/>
            <person name="Stam H."/>
        </authorList>
    </citation>
    <scope>NUCLEOTIDE SEQUENCE [LARGE SCALE GENOMIC DNA]</scope>
    <source>
        <strain>ATCC MYA-4892 / CBS 513.88 / FGSC A1513</strain>
    </source>
</reference>
<reference key="2">
    <citation type="journal article" date="2018" name="Microbiol. Res.">
        <title>Deletion of the epigenetic regulator GcnE in Aspergillus niger FGSC A1279 activates the production of multiple polyketide metabolites.</title>
        <authorList>
            <person name="Wang B."/>
            <person name="Li X."/>
            <person name="Yu D."/>
            <person name="Chen X."/>
            <person name="Tabudravu J."/>
            <person name="Deng H."/>
            <person name="Pan L."/>
        </authorList>
    </citation>
    <scope>IDENTIFICATION</scope>
    <scope>FUNCTION</scope>
    <scope>PATHWAY</scope>
</reference>
<protein>
    <recommendedName>
        <fullName evidence="4">Cytochrome P450 monooxygenase orf2</fullName>
        <ecNumber evidence="6">1.-.-.-</ecNumber>
    </recommendedName>
    <alternativeName>
        <fullName evidence="4">Pestalamide A biosynthesis cluster protein orf2</fullName>
    </alternativeName>
</protein>
<comment type="function">
    <text evidence="3 6">Cytochrome P450 monooxygenase; part of the gene cluster that mediates the biosynthesis of nigerpyrone and its derivatives carbonarone A and pestalamide A (PubMed:30384904). The biosynthesis pathway begins with the polyketide assembly by epaA to form phenylacetyl triketide precursor from successive condensation of two malonyl-CoA, presumably with one phenylacetyl-CoA starter unit produced by the phenylacetyl-CoA ligase epaB (PubMed:30384904). For the nigerpyrone biosynthesis, the reactive polyketide chain is released as an aldehyde through the R-domain. A nonenzymatic cyclization and dehydration may create nigerpyrone (PubMed:30384904). For the biosynthesis of carbonarone A and pestalamide A, an extra methyl group is added through the C-methyltransferase domain. Several further steps involving the dehydrogenase orf1, the cytochrome P450 monooxygenase orf2 and the FAD-dependent monooxygenase orf3 are required to form a carbonarone A precursor which is converted to carbonarone A via cyclization (PubMed:30384904). The O-acetyltransferase epaC could catalyze the transfer of 2-methylsuccinyl-CoA, a common intermediate in the ethylmalonyl-CoA pathway, to generate the final product pestalamide A (Probable).</text>
</comment>
<comment type="cofactor">
    <cofactor evidence="1">
        <name>heme</name>
        <dbReference type="ChEBI" id="CHEBI:30413"/>
    </cofactor>
</comment>
<comment type="pathway">
    <text evidence="6">Secondary metabolite biosynthesis.</text>
</comment>
<comment type="subcellular location">
    <subcellularLocation>
        <location evidence="2">Membrane</location>
        <topology evidence="2">Single-pass membrane protein</topology>
    </subcellularLocation>
</comment>
<comment type="similarity">
    <text evidence="5">Belongs to the cytochrome P450 family.</text>
</comment>
<proteinExistence type="inferred from homology"/>
<name>EPAE_ASPNC</name>
<evidence type="ECO:0000250" key="1">
    <source>
        <dbReference type="UniProtKB" id="P04798"/>
    </source>
</evidence>
<evidence type="ECO:0000255" key="2"/>
<evidence type="ECO:0000269" key="3">
    <source>
    </source>
</evidence>
<evidence type="ECO:0000303" key="4">
    <source>
    </source>
</evidence>
<evidence type="ECO:0000305" key="5"/>
<evidence type="ECO:0000305" key="6">
    <source>
    </source>
</evidence>
<sequence length="488" mass="55371">MESLAHLPGIFLPLAGCVLALSLTTIVYRTVTNPLSHIPGPQISKWSSLIEQYYWFAGTKVEYVDYLHRKYGPIVRVTPTEVDICDLPAVREIHRVRGGYLKSEWYKSLTPPGVTSLLTLIEPAQYSEWRRLLAGPLSDTSLGKVEPMVTNHVHATIDRIASDLQSQGVSDLYKWWTYMATDVVSELSFGEPIGLLARPKETAWVMDYLDKVGIMHAWRTTFPFVFVLGRFMPVHPFKHAIQAIGLLGKWARQSIQQYRQHIQEQPESPKPTLFTKLFKTGKFDDFQLTYLAGSYITAGSHTTAVTLLYLIYAICSDNEVRQKLLAEIRTLPENFRHDELRHLPYLNQVITETLRKYAVVSSALPRVVPAGGATLAGYYLPGGTTVSTQAYTLHRNEAIFPNPEKFDPSRWESPTQDMKDAYMPFGGASRMCIGNSLALMEIRLTTTLFLRRFPEVHMSRQNGMRDEDLAQEQYLIMAPRGQRLLVEA</sequence>
<gene>
    <name evidence="4" type="primary">orf2</name>
    <name type="ORF">An09g01850</name>
</gene>
<keyword id="KW-0349">Heme</keyword>
<keyword id="KW-0408">Iron</keyword>
<keyword id="KW-0472">Membrane</keyword>
<keyword id="KW-0479">Metal-binding</keyword>
<keyword id="KW-0503">Monooxygenase</keyword>
<keyword id="KW-0560">Oxidoreductase</keyword>
<keyword id="KW-1185">Reference proteome</keyword>
<keyword id="KW-0812">Transmembrane</keyword>
<keyword id="KW-1133">Transmembrane helix</keyword>